<feature type="chain" id="PRO_1000076490" description="Bifunctional purine biosynthesis protein PurH">
    <location>
        <begin position="1"/>
        <end position="535"/>
    </location>
</feature>
<feature type="domain" description="MGS-like" evidence="2">
    <location>
        <begin position="6"/>
        <end position="151"/>
    </location>
</feature>
<accession>B0KJZ6</accession>
<comment type="catalytic activity">
    <reaction evidence="1">
        <text>(6R)-10-formyltetrahydrofolate + 5-amino-1-(5-phospho-beta-D-ribosyl)imidazole-4-carboxamide = 5-formamido-1-(5-phospho-D-ribosyl)imidazole-4-carboxamide + (6S)-5,6,7,8-tetrahydrofolate</text>
        <dbReference type="Rhea" id="RHEA:22192"/>
        <dbReference type="ChEBI" id="CHEBI:57453"/>
        <dbReference type="ChEBI" id="CHEBI:58467"/>
        <dbReference type="ChEBI" id="CHEBI:58475"/>
        <dbReference type="ChEBI" id="CHEBI:195366"/>
        <dbReference type="EC" id="2.1.2.3"/>
    </reaction>
</comment>
<comment type="catalytic activity">
    <reaction evidence="1">
        <text>IMP + H2O = 5-formamido-1-(5-phospho-D-ribosyl)imidazole-4-carboxamide</text>
        <dbReference type="Rhea" id="RHEA:18445"/>
        <dbReference type="ChEBI" id="CHEBI:15377"/>
        <dbReference type="ChEBI" id="CHEBI:58053"/>
        <dbReference type="ChEBI" id="CHEBI:58467"/>
        <dbReference type="EC" id="3.5.4.10"/>
    </reaction>
</comment>
<comment type="pathway">
    <text evidence="1">Purine metabolism; IMP biosynthesis via de novo pathway; 5-formamido-1-(5-phospho-D-ribosyl)imidazole-4-carboxamide from 5-amino-1-(5-phospho-D-ribosyl)imidazole-4-carboxamide (10-formyl THF route): step 1/1.</text>
</comment>
<comment type="pathway">
    <text evidence="1">Purine metabolism; IMP biosynthesis via de novo pathway; IMP from 5-formamido-1-(5-phospho-D-ribosyl)imidazole-4-carboxamide: step 1/1.</text>
</comment>
<comment type="domain">
    <text evidence="1">The IMP cyclohydrolase activity resides in the N-terminal region.</text>
</comment>
<comment type="similarity">
    <text evidence="1">Belongs to the PurH family.</text>
</comment>
<gene>
    <name evidence="1" type="primary">purH</name>
    <name type="ordered locus">PputGB1_4875</name>
</gene>
<proteinExistence type="inferred from homology"/>
<evidence type="ECO:0000255" key="1">
    <source>
        <dbReference type="HAMAP-Rule" id="MF_00139"/>
    </source>
</evidence>
<evidence type="ECO:0000255" key="2">
    <source>
        <dbReference type="PROSITE-ProRule" id="PRU01202"/>
    </source>
</evidence>
<keyword id="KW-0378">Hydrolase</keyword>
<keyword id="KW-0511">Multifunctional enzyme</keyword>
<keyword id="KW-0658">Purine biosynthesis</keyword>
<keyword id="KW-0808">Transferase</keyword>
<reference key="1">
    <citation type="submission" date="2008-01" db="EMBL/GenBank/DDBJ databases">
        <title>Complete sequence of Pseudomonas putida GB-1.</title>
        <authorList>
            <consortium name="US DOE Joint Genome Institute"/>
            <person name="Copeland A."/>
            <person name="Lucas S."/>
            <person name="Lapidus A."/>
            <person name="Barry K."/>
            <person name="Glavina del Rio T."/>
            <person name="Dalin E."/>
            <person name="Tice H."/>
            <person name="Pitluck S."/>
            <person name="Bruce D."/>
            <person name="Goodwin L."/>
            <person name="Chertkov O."/>
            <person name="Brettin T."/>
            <person name="Detter J.C."/>
            <person name="Han C."/>
            <person name="Kuske C.R."/>
            <person name="Schmutz J."/>
            <person name="Larimer F."/>
            <person name="Land M."/>
            <person name="Hauser L."/>
            <person name="Kyrpides N."/>
            <person name="Kim E."/>
            <person name="McCarthy J.K."/>
            <person name="Richardson P."/>
        </authorList>
    </citation>
    <scope>NUCLEOTIDE SEQUENCE [LARGE SCALE GENOMIC DNA]</scope>
    <source>
        <strain>GB-1</strain>
    </source>
</reference>
<protein>
    <recommendedName>
        <fullName evidence="1">Bifunctional purine biosynthesis protein PurH</fullName>
    </recommendedName>
    <domain>
        <recommendedName>
            <fullName evidence="1">Phosphoribosylaminoimidazolecarboxamide formyltransferase</fullName>
            <ecNumber evidence="1">2.1.2.3</ecNumber>
        </recommendedName>
        <alternativeName>
            <fullName evidence="1">AICAR transformylase</fullName>
        </alternativeName>
    </domain>
    <domain>
        <recommendedName>
            <fullName evidence="1">IMP cyclohydrolase</fullName>
            <ecNumber evidence="1">3.5.4.10</ecNumber>
        </recommendedName>
        <alternativeName>
            <fullName evidence="1">ATIC</fullName>
        </alternativeName>
        <alternativeName>
            <fullName evidence="1">IMP synthase</fullName>
        </alternativeName>
        <alternativeName>
            <fullName evidence="1">Inosinicase</fullName>
        </alternativeName>
    </domain>
</protein>
<dbReference type="EC" id="2.1.2.3" evidence="1"/>
<dbReference type="EC" id="3.5.4.10" evidence="1"/>
<dbReference type="EMBL" id="CP000926">
    <property type="protein sequence ID" value="ABZ00760.1"/>
    <property type="molecule type" value="Genomic_DNA"/>
</dbReference>
<dbReference type="RefSeq" id="WP_012274391.1">
    <property type="nucleotide sequence ID" value="NC_010322.1"/>
</dbReference>
<dbReference type="SMR" id="B0KJZ6"/>
<dbReference type="KEGG" id="ppg:PputGB1_4875"/>
<dbReference type="eggNOG" id="COG0138">
    <property type="taxonomic scope" value="Bacteria"/>
</dbReference>
<dbReference type="HOGENOM" id="CLU_016316_5_2_6"/>
<dbReference type="UniPathway" id="UPA00074">
    <property type="reaction ID" value="UER00133"/>
</dbReference>
<dbReference type="UniPathway" id="UPA00074">
    <property type="reaction ID" value="UER00135"/>
</dbReference>
<dbReference type="Proteomes" id="UP000002157">
    <property type="component" value="Chromosome"/>
</dbReference>
<dbReference type="GO" id="GO:0005829">
    <property type="term" value="C:cytosol"/>
    <property type="evidence" value="ECO:0007669"/>
    <property type="project" value="TreeGrafter"/>
</dbReference>
<dbReference type="GO" id="GO:0003937">
    <property type="term" value="F:IMP cyclohydrolase activity"/>
    <property type="evidence" value="ECO:0007669"/>
    <property type="project" value="UniProtKB-UniRule"/>
</dbReference>
<dbReference type="GO" id="GO:0004643">
    <property type="term" value="F:phosphoribosylaminoimidazolecarboxamide formyltransferase activity"/>
    <property type="evidence" value="ECO:0007669"/>
    <property type="project" value="UniProtKB-UniRule"/>
</dbReference>
<dbReference type="GO" id="GO:0006189">
    <property type="term" value="P:'de novo' IMP biosynthetic process"/>
    <property type="evidence" value="ECO:0007669"/>
    <property type="project" value="UniProtKB-UniRule"/>
</dbReference>
<dbReference type="CDD" id="cd01421">
    <property type="entry name" value="IMPCH"/>
    <property type="match status" value="1"/>
</dbReference>
<dbReference type="FunFam" id="3.40.140.20:FF:000001">
    <property type="entry name" value="Bifunctional purine biosynthesis protein PurH"/>
    <property type="match status" value="1"/>
</dbReference>
<dbReference type="FunFam" id="3.40.140.20:FF:000002">
    <property type="entry name" value="Bifunctional purine biosynthesis protein PurH"/>
    <property type="match status" value="1"/>
</dbReference>
<dbReference type="FunFam" id="3.40.50.1380:FF:000001">
    <property type="entry name" value="Bifunctional purine biosynthesis protein PurH"/>
    <property type="match status" value="1"/>
</dbReference>
<dbReference type="Gene3D" id="3.40.140.20">
    <property type="match status" value="2"/>
</dbReference>
<dbReference type="Gene3D" id="3.40.50.1380">
    <property type="entry name" value="Methylglyoxal synthase-like domain"/>
    <property type="match status" value="1"/>
</dbReference>
<dbReference type="HAMAP" id="MF_00139">
    <property type="entry name" value="PurH"/>
    <property type="match status" value="1"/>
</dbReference>
<dbReference type="InterPro" id="IPR024051">
    <property type="entry name" value="AICAR_Tfase_dup_dom_sf"/>
</dbReference>
<dbReference type="InterPro" id="IPR016193">
    <property type="entry name" value="Cytidine_deaminase-like"/>
</dbReference>
<dbReference type="InterPro" id="IPR011607">
    <property type="entry name" value="MGS-like_dom"/>
</dbReference>
<dbReference type="InterPro" id="IPR036914">
    <property type="entry name" value="MGS-like_dom_sf"/>
</dbReference>
<dbReference type="InterPro" id="IPR002695">
    <property type="entry name" value="PurH-like"/>
</dbReference>
<dbReference type="NCBIfam" id="NF002049">
    <property type="entry name" value="PRK00881.1"/>
    <property type="match status" value="1"/>
</dbReference>
<dbReference type="NCBIfam" id="TIGR00355">
    <property type="entry name" value="purH"/>
    <property type="match status" value="1"/>
</dbReference>
<dbReference type="PANTHER" id="PTHR11692:SF0">
    <property type="entry name" value="BIFUNCTIONAL PURINE BIOSYNTHESIS PROTEIN ATIC"/>
    <property type="match status" value="1"/>
</dbReference>
<dbReference type="PANTHER" id="PTHR11692">
    <property type="entry name" value="BIFUNCTIONAL PURINE BIOSYNTHESIS PROTEIN PURH"/>
    <property type="match status" value="1"/>
</dbReference>
<dbReference type="Pfam" id="PF01808">
    <property type="entry name" value="AICARFT_IMPCHas"/>
    <property type="match status" value="1"/>
</dbReference>
<dbReference type="Pfam" id="PF02142">
    <property type="entry name" value="MGS"/>
    <property type="match status" value="1"/>
</dbReference>
<dbReference type="PIRSF" id="PIRSF000414">
    <property type="entry name" value="AICARFT_IMPCHas"/>
    <property type="match status" value="1"/>
</dbReference>
<dbReference type="SMART" id="SM00798">
    <property type="entry name" value="AICARFT_IMPCHas"/>
    <property type="match status" value="1"/>
</dbReference>
<dbReference type="SMART" id="SM00851">
    <property type="entry name" value="MGS"/>
    <property type="match status" value="1"/>
</dbReference>
<dbReference type="SUPFAM" id="SSF53927">
    <property type="entry name" value="Cytidine deaminase-like"/>
    <property type="match status" value="1"/>
</dbReference>
<dbReference type="SUPFAM" id="SSF52335">
    <property type="entry name" value="Methylglyoxal synthase-like"/>
    <property type="match status" value="1"/>
</dbReference>
<dbReference type="PROSITE" id="PS51855">
    <property type="entry name" value="MGS"/>
    <property type="match status" value="1"/>
</dbReference>
<sequence length="535" mass="57738">MTDQTTRLPVRRALISVSDKTGILEFARELQQLGVEILSTGGTYKLLKDNGVNAVEVADYTGFAEMMDGRVKTLHPKIHGGILGRRGTDDAIMNEHGIKPIDLVAVNLYPFEATISKPGCDLPTAIENIDIGGPTMVRSAAKNHKDVAIVVNASDYAGIVEGLKVGGLTYAQRFDLMLKAFEHTAAYDGMIANYMGTIDQAKDTLSTADRSEFPRTFNSQFVKAQEMRYGENPHQSAAFYVEAKKGEASISTAIQLQGKELSFNNVADTDAALECVKSFVKPACVIVKHANPCGVAVVPEEEGGIRKAYDLAYATDTESAFGGIIAFNRELDGETAKAIVDRQFVEVIIAPKISQAARDVVAAKQNVRLLECGEWPAERAAGWDFKRVNGGLLVQSRDIGMITADDLKIVTKRAPTEQEIHDLVFAWKVAKFVKSNAIVYAKQRQTIGVGAGQMSRVNSARIAAIKAEHAGLQVQGAVMASDAFFPFRDGIDNAAKVGISAVIQPGGSMRDAEVIAAADEAGIAMVFTGMRHFRH</sequence>
<organism>
    <name type="scientific">Pseudomonas putida (strain GB-1)</name>
    <dbReference type="NCBI Taxonomy" id="76869"/>
    <lineage>
        <taxon>Bacteria</taxon>
        <taxon>Pseudomonadati</taxon>
        <taxon>Pseudomonadota</taxon>
        <taxon>Gammaproteobacteria</taxon>
        <taxon>Pseudomonadales</taxon>
        <taxon>Pseudomonadaceae</taxon>
        <taxon>Pseudomonas</taxon>
    </lineage>
</organism>
<name>PUR9_PSEPG</name>